<organism>
    <name type="scientific">Escherichia coli (strain ATCC 8739 / DSM 1576 / NBRC 3972 / NCIMB 8545 / WDCM 00012 / Crooks)</name>
    <dbReference type="NCBI Taxonomy" id="481805"/>
    <lineage>
        <taxon>Bacteria</taxon>
        <taxon>Pseudomonadati</taxon>
        <taxon>Pseudomonadota</taxon>
        <taxon>Gammaproteobacteria</taxon>
        <taxon>Enterobacterales</taxon>
        <taxon>Enterobacteriaceae</taxon>
        <taxon>Escherichia</taxon>
    </lineage>
</organism>
<evidence type="ECO:0000255" key="1">
    <source>
        <dbReference type="HAMAP-Rule" id="MF_01638"/>
    </source>
</evidence>
<proteinExistence type="inferred from homology"/>
<reference key="1">
    <citation type="submission" date="2008-02" db="EMBL/GenBank/DDBJ databases">
        <title>Complete sequence of Escherichia coli C str. ATCC 8739.</title>
        <authorList>
            <person name="Copeland A."/>
            <person name="Lucas S."/>
            <person name="Lapidus A."/>
            <person name="Glavina del Rio T."/>
            <person name="Dalin E."/>
            <person name="Tice H."/>
            <person name="Bruce D."/>
            <person name="Goodwin L."/>
            <person name="Pitluck S."/>
            <person name="Kiss H."/>
            <person name="Brettin T."/>
            <person name="Detter J.C."/>
            <person name="Han C."/>
            <person name="Kuske C.R."/>
            <person name="Schmutz J."/>
            <person name="Larimer F."/>
            <person name="Land M."/>
            <person name="Hauser L."/>
            <person name="Kyrpides N."/>
            <person name="Mikhailova N."/>
            <person name="Ingram L."/>
            <person name="Richardson P."/>
        </authorList>
    </citation>
    <scope>NUCLEOTIDE SEQUENCE [LARGE SCALE GENOMIC DNA]</scope>
    <source>
        <strain>ATCC 8739 / DSM 1576 / NBRC 3972 / NCIMB 8545 / WDCM 00012 / Crooks</strain>
    </source>
</reference>
<protein>
    <recommendedName>
        <fullName evidence="1">Pyridoxine/pyridoxal/pyridoxamine kinase</fullName>
        <shortName evidence="1">PN/PL/PM kinase</shortName>
        <ecNumber evidence="1">2.7.1.35</ecNumber>
    </recommendedName>
    <alternativeName>
        <fullName evidence="1">B6-vitamer kinase</fullName>
    </alternativeName>
</protein>
<name>PDXK_ECOLC</name>
<comment type="function">
    <text evidence="1">B6-vitamer kinase involved in the salvage pathway of pyridoxal 5'-phosphate (PLP). Catalyzes the phosphorylation of pyridoxine (PN), pyridoxal (PL), and pyridoxamine (PM), forming their respective 5'-phosphorylated esters, i.e. PNP, PLP and PMP.</text>
</comment>
<comment type="catalytic activity">
    <reaction evidence="1">
        <text>pyridoxal + ATP = pyridoxal 5'-phosphate + ADP + H(+)</text>
        <dbReference type="Rhea" id="RHEA:10224"/>
        <dbReference type="ChEBI" id="CHEBI:15378"/>
        <dbReference type="ChEBI" id="CHEBI:17310"/>
        <dbReference type="ChEBI" id="CHEBI:30616"/>
        <dbReference type="ChEBI" id="CHEBI:456216"/>
        <dbReference type="ChEBI" id="CHEBI:597326"/>
        <dbReference type="EC" id="2.7.1.35"/>
    </reaction>
</comment>
<comment type="catalytic activity">
    <reaction evidence="1">
        <text>pyridoxine + ATP = pyridoxine 5'-phosphate + ADP + H(+)</text>
        <dbReference type="Rhea" id="RHEA:25108"/>
        <dbReference type="ChEBI" id="CHEBI:15378"/>
        <dbReference type="ChEBI" id="CHEBI:16709"/>
        <dbReference type="ChEBI" id="CHEBI:30616"/>
        <dbReference type="ChEBI" id="CHEBI:58589"/>
        <dbReference type="ChEBI" id="CHEBI:456216"/>
        <dbReference type="EC" id="2.7.1.35"/>
    </reaction>
</comment>
<comment type="catalytic activity">
    <reaction evidence="1">
        <text>pyridoxamine + ATP = pyridoxamine 5'-phosphate + ADP + H(+)</text>
        <dbReference type="Rhea" id="RHEA:25104"/>
        <dbReference type="ChEBI" id="CHEBI:15378"/>
        <dbReference type="ChEBI" id="CHEBI:30616"/>
        <dbReference type="ChEBI" id="CHEBI:57761"/>
        <dbReference type="ChEBI" id="CHEBI:58451"/>
        <dbReference type="ChEBI" id="CHEBI:456216"/>
        <dbReference type="EC" id="2.7.1.35"/>
    </reaction>
</comment>
<comment type="cofactor">
    <cofactor evidence="1">
        <name>Mg(2+)</name>
        <dbReference type="ChEBI" id="CHEBI:18420"/>
    </cofactor>
</comment>
<comment type="pathway">
    <text evidence="1">Cofactor metabolism; pyridoxal 5'-phosphate salvage; pyridoxal 5'-phosphate from pyridoxal: step 1/1.</text>
</comment>
<comment type="pathway">
    <text evidence="1">Cofactor metabolism; pyridoxal 5'-phosphate salvage; pyridoxine 5'-phosphate from pyridoxine: step 1/1.</text>
</comment>
<comment type="pathway">
    <text evidence="1">Cofactor metabolism; pyridoxal 5'-phosphate salvage; pyridoxamine 5'-phosphate from pyridoxamine: step 1/1.</text>
</comment>
<comment type="subunit">
    <text evidence="1">Homodimer.</text>
</comment>
<comment type="similarity">
    <text evidence="1">Belongs to the pyridoxine kinase family. PdxK subfamily.</text>
</comment>
<sequence length="283" mass="30847">MSSLLLFNDKSRALQADIVAVQSQVVYGSVGNSIAVPAIKQNGLNVFAVPTVLLSNTPHYDTFYGGAIPDEWFSGYLRALQERDALRQLRAVTTGYMGTASQIKILAEWLTALRKDHPDLLIMVDPVIGDIDSGIYVKPDLPEAYRQYLLPLAQGITPNIFELEILTGKNCRDLDSAIAAAKSLLSDTLKWVVVTSASGNEENQEMQVVVVTADSVNVISHSRVKTDLKGTGDLFCAQLISGLLKGKALTDAVHRAGLRVLEVMRYTQQHESDELILPPLAEA</sequence>
<gene>
    <name evidence="1" type="primary">pdxK</name>
    <name type="ordered locus">EcolC_1260</name>
</gene>
<feature type="chain" id="PRO_1000088203" description="Pyridoxine/pyridoxal/pyridoxamine kinase">
    <location>
        <begin position="1"/>
        <end position="283"/>
    </location>
</feature>
<feature type="binding site" evidence="1">
    <location>
        <position position="23"/>
    </location>
    <ligand>
        <name>substrate</name>
    </ligand>
</feature>
<feature type="binding site" evidence="1">
    <location>
        <position position="59"/>
    </location>
    <ligand>
        <name>substrate</name>
    </ligand>
</feature>
<feature type="binding site" evidence="1">
    <location>
        <position position="125"/>
    </location>
    <ligand>
        <name>ATP</name>
        <dbReference type="ChEBI" id="CHEBI:30616"/>
    </ligand>
</feature>
<feature type="binding site" evidence="1">
    <location>
        <position position="136"/>
    </location>
    <ligand>
        <name>Mg(2+)</name>
        <dbReference type="ChEBI" id="CHEBI:18420"/>
    </ligand>
</feature>
<feature type="binding site" evidence="1">
    <location>
        <position position="157"/>
    </location>
    <ligand>
        <name>ATP</name>
        <dbReference type="ChEBI" id="CHEBI:30616"/>
    </ligand>
</feature>
<feature type="binding site" evidence="1">
    <location>
        <position position="162"/>
    </location>
    <ligand>
        <name>ATP</name>
        <dbReference type="ChEBI" id="CHEBI:30616"/>
    </ligand>
</feature>
<feature type="binding site" evidence="1">
    <location>
        <position position="162"/>
    </location>
    <ligand>
        <name>Mg(2+)</name>
        <dbReference type="ChEBI" id="CHEBI:18420"/>
    </ligand>
</feature>
<feature type="binding site" evidence="1">
    <location>
        <position position="195"/>
    </location>
    <ligand>
        <name>ATP</name>
        <dbReference type="ChEBI" id="CHEBI:30616"/>
    </ligand>
</feature>
<feature type="binding site" evidence="1">
    <location>
        <begin position="221"/>
        <end position="224"/>
    </location>
    <ligand>
        <name>ATP</name>
        <dbReference type="ChEBI" id="CHEBI:30616"/>
    </ligand>
</feature>
<feature type="binding site" evidence="1">
    <location>
        <position position="231"/>
    </location>
    <ligand>
        <name>ATP</name>
        <dbReference type="ChEBI" id="CHEBI:30616"/>
    </ligand>
</feature>
<feature type="binding site" evidence="1">
    <location>
        <position position="233"/>
    </location>
    <ligand>
        <name>substrate</name>
    </ligand>
</feature>
<accession>B1IX53</accession>
<keyword id="KW-0067">ATP-binding</keyword>
<keyword id="KW-0418">Kinase</keyword>
<keyword id="KW-0460">Magnesium</keyword>
<keyword id="KW-0479">Metal-binding</keyword>
<keyword id="KW-0547">Nucleotide-binding</keyword>
<keyword id="KW-0808">Transferase</keyword>
<keyword id="KW-0862">Zinc</keyword>
<dbReference type="EC" id="2.7.1.35" evidence="1"/>
<dbReference type="EMBL" id="CP000946">
    <property type="protein sequence ID" value="ACA76926.1"/>
    <property type="molecule type" value="Genomic_DNA"/>
</dbReference>
<dbReference type="RefSeq" id="WP_000096674.1">
    <property type="nucleotide sequence ID" value="NZ_MTFT01000002.1"/>
</dbReference>
<dbReference type="SMR" id="B1IX53"/>
<dbReference type="KEGG" id="ecl:EcolC_1260"/>
<dbReference type="HOGENOM" id="CLU_046496_3_1_6"/>
<dbReference type="UniPathway" id="UPA01068">
    <property type="reaction ID" value="UER00298"/>
</dbReference>
<dbReference type="UniPathway" id="UPA01068">
    <property type="reaction ID" value="UER00299"/>
</dbReference>
<dbReference type="UniPathway" id="UPA01068">
    <property type="reaction ID" value="UER00300"/>
</dbReference>
<dbReference type="GO" id="GO:0005829">
    <property type="term" value="C:cytosol"/>
    <property type="evidence" value="ECO:0007669"/>
    <property type="project" value="TreeGrafter"/>
</dbReference>
<dbReference type="GO" id="GO:0005524">
    <property type="term" value="F:ATP binding"/>
    <property type="evidence" value="ECO:0007669"/>
    <property type="project" value="UniProtKB-UniRule"/>
</dbReference>
<dbReference type="GO" id="GO:0008902">
    <property type="term" value="F:hydroxymethylpyrimidine kinase activity"/>
    <property type="evidence" value="ECO:0007669"/>
    <property type="project" value="TreeGrafter"/>
</dbReference>
<dbReference type="GO" id="GO:0000287">
    <property type="term" value="F:magnesium ion binding"/>
    <property type="evidence" value="ECO:0007669"/>
    <property type="project" value="UniProtKB-UniRule"/>
</dbReference>
<dbReference type="GO" id="GO:0008478">
    <property type="term" value="F:pyridoxal kinase activity"/>
    <property type="evidence" value="ECO:0007669"/>
    <property type="project" value="UniProtKB-UniRule"/>
</dbReference>
<dbReference type="GO" id="GO:0008270">
    <property type="term" value="F:zinc ion binding"/>
    <property type="evidence" value="ECO:0007669"/>
    <property type="project" value="UniProtKB-UniRule"/>
</dbReference>
<dbReference type="GO" id="GO:0009443">
    <property type="term" value="P:pyridoxal 5'-phosphate salvage"/>
    <property type="evidence" value="ECO:0007669"/>
    <property type="project" value="UniProtKB-UniRule"/>
</dbReference>
<dbReference type="CDD" id="cd01173">
    <property type="entry name" value="pyridoxal_pyridoxamine_kinase"/>
    <property type="match status" value="1"/>
</dbReference>
<dbReference type="FunFam" id="3.40.1190.20:FF:000009">
    <property type="entry name" value="Pyridoxine/pyridoxal/pyridoxamine kinase"/>
    <property type="match status" value="1"/>
</dbReference>
<dbReference type="Gene3D" id="3.40.1190.20">
    <property type="match status" value="1"/>
</dbReference>
<dbReference type="HAMAP" id="MF_01638">
    <property type="entry name" value="PdxK"/>
    <property type="match status" value="1"/>
</dbReference>
<dbReference type="InterPro" id="IPR023479">
    <property type="entry name" value="PdxK"/>
</dbReference>
<dbReference type="InterPro" id="IPR013749">
    <property type="entry name" value="PM/HMP-P_kinase-1"/>
</dbReference>
<dbReference type="InterPro" id="IPR004625">
    <property type="entry name" value="PyrdxlKinase"/>
</dbReference>
<dbReference type="InterPro" id="IPR029056">
    <property type="entry name" value="Ribokinase-like"/>
</dbReference>
<dbReference type="NCBIfam" id="NF006034">
    <property type="entry name" value="PRK08176.1"/>
    <property type="match status" value="1"/>
</dbReference>
<dbReference type="NCBIfam" id="TIGR00687">
    <property type="entry name" value="pyridox_kin"/>
    <property type="match status" value="1"/>
</dbReference>
<dbReference type="PANTHER" id="PTHR10534">
    <property type="entry name" value="PYRIDOXAL KINASE"/>
    <property type="match status" value="1"/>
</dbReference>
<dbReference type="PANTHER" id="PTHR10534:SF15">
    <property type="entry name" value="PYRIDOXINE_PYRIDOXAL_PYRIDOXAMINE KINASE"/>
    <property type="match status" value="1"/>
</dbReference>
<dbReference type="Pfam" id="PF08543">
    <property type="entry name" value="Phos_pyr_kin"/>
    <property type="match status" value="1"/>
</dbReference>
<dbReference type="SUPFAM" id="SSF53613">
    <property type="entry name" value="Ribokinase-like"/>
    <property type="match status" value="1"/>
</dbReference>